<proteinExistence type="inferred from homology"/>
<accession>P44984</accession>
<reference key="1">
    <citation type="journal article" date="1995" name="Science">
        <title>Whole-genome random sequencing and assembly of Haemophilus influenzae Rd.</title>
        <authorList>
            <person name="Fleischmann R.D."/>
            <person name="Adams M.D."/>
            <person name="White O."/>
            <person name="Clayton R.A."/>
            <person name="Kirkness E.F."/>
            <person name="Kerlavage A.R."/>
            <person name="Bult C.J."/>
            <person name="Tomb J.-F."/>
            <person name="Dougherty B.A."/>
            <person name="Merrick J.M."/>
            <person name="McKenney K."/>
            <person name="Sutton G.G."/>
            <person name="FitzHugh W."/>
            <person name="Fields C.A."/>
            <person name="Gocayne J.D."/>
            <person name="Scott J.D."/>
            <person name="Shirley R."/>
            <person name="Liu L.-I."/>
            <person name="Glodek A."/>
            <person name="Kelley J.M."/>
            <person name="Weidman J.F."/>
            <person name="Phillips C.A."/>
            <person name="Spriggs T."/>
            <person name="Hedblom E."/>
            <person name="Cotton M.D."/>
            <person name="Utterback T.R."/>
            <person name="Hanna M.C."/>
            <person name="Nguyen D.T."/>
            <person name="Saudek D.M."/>
            <person name="Brandon R.C."/>
            <person name="Fine L.D."/>
            <person name="Fritchman J.L."/>
            <person name="Fuhrmann J.L."/>
            <person name="Geoghagen N.S.M."/>
            <person name="Gnehm C.L."/>
            <person name="McDonald L.A."/>
            <person name="Small K.V."/>
            <person name="Fraser C.M."/>
            <person name="Smith H.O."/>
            <person name="Venter J.C."/>
        </authorList>
    </citation>
    <scope>NUCLEOTIDE SEQUENCE [LARGE SCALE GENOMIC DNA]</scope>
    <source>
        <strain>ATCC 51907 / DSM 11121 / KW20 / Rd</strain>
    </source>
</reference>
<keyword id="KW-0574">Periplasm</keyword>
<keyword id="KW-1185">Reference proteome</keyword>
<keyword id="KW-0732">Signal</keyword>
<keyword id="KW-0813">Transport</keyword>
<name>THIB_HAEIN</name>
<sequence length="332" mass="37272">MKLLKLTLISTALFSTAALAQAQQSVNVYSYDSFTSEWGAGPKVKQDFEKAHPQCAINFTPFESVGVLLNRVRLEGKKTKADIVLGLDNFFLEQAEKTGIFAPNNVDLTQLDLPTKWANKTFLPFDFGNYAFVYDKTKLQNPPKSLKELVERQDLSVIYQDPRTSSVGRGLLVWMNAVYPADKIQSAWKELDKHTVTVGKGWSDTYGAFLKGEADLVLSYSTSPLYHQLFEKKDNYAATDFAEGHITQVELAARVANHPNQCADDFMAFLISPTAQKHIVTANIMLPVIQGEIEPHFDALKVQQKTQTSINPMVNTEQLKNWISTWQTTLTK</sequence>
<comment type="function">
    <text evidence="1">Part of the ABC transporter complex ThiBPQ involved in thiamine import.</text>
</comment>
<comment type="subunit">
    <text evidence="2">The complex is composed of two ATP-binding proteins (ThiQ), two transmembrane proteins (ThiP) and a solute-binding protein (ThiB).</text>
</comment>
<comment type="subcellular location">
    <subcellularLocation>
        <location evidence="1">Periplasm</location>
    </subcellularLocation>
</comment>
<comment type="similarity">
    <text evidence="4">Belongs to the bacterial solute-binding protein 1 family.</text>
</comment>
<evidence type="ECO:0000250" key="1">
    <source>
        <dbReference type="UniProtKB" id="P31550"/>
    </source>
</evidence>
<evidence type="ECO:0000250" key="2">
    <source>
        <dbReference type="UniProtKB" id="Q7CR85"/>
    </source>
</evidence>
<evidence type="ECO:0000255" key="3"/>
<evidence type="ECO:0000305" key="4"/>
<organism>
    <name type="scientific">Haemophilus influenzae (strain ATCC 51907 / DSM 11121 / KW20 / Rd)</name>
    <dbReference type="NCBI Taxonomy" id="71421"/>
    <lineage>
        <taxon>Bacteria</taxon>
        <taxon>Pseudomonadati</taxon>
        <taxon>Pseudomonadota</taxon>
        <taxon>Gammaproteobacteria</taxon>
        <taxon>Pasteurellales</taxon>
        <taxon>Pasteurellaceae</taxon>
        <taxon>Haemophilus</taxon>
    </lineage>
</organism>
<dbReference type="EMBL" id="L42023">
    <property type="protein sequence ID" value="AAC22678.1"/>
    <property type="molecule type" value="Genomic_DNA"/>
</dbReference>
<dbReference type="PIR" id="C64164">
    <property type="entry name" value="C64164"/>
</dbReference>
<dbReference type="RefSeq" id="NP_439179.1">
    <property type="nucleotide sequence ID" value="NC_000907.1"/>
</dbReference>
<dbReference type="SMR" id="P44984"/>
<dbReference type="STRING" id="71421.HI_1019"/>
<dbReference type="EnsemblBacteria" id="AAC22678">
    <property type="protein sequence ID" value="AAC22678"/>
    <property type="gene ID" value="HI_1019"/>
</dbReference>
<dbReference type="KEGG" id="hin:HI_1019"/>
<dbReference type="PATRIC" id="fig|71421.8.peg.1063"/>
<dbReference type="eggNOG" id="COG4143">
    <property type="taxonomic scope" value="Bacteria"/>
</dbReference>
<dbReference type="HOGENOM" id="CLU_026974_6_0_6"/>
<dbReference type="OrthoDB" id="8013425at2"/>
<dbReference type="PhylomeDB" id="P44984"/>
<dbReference type="BioCyc" id="HINF71421:G1GJ1-1059-MONOMER"/>
<dbReference type="Proteomes" id="UP000000579">
    <property type="component" value="Chromosome"/>
</dbReference>
<dbReference type="GO" id="GO:0030288">
    <property type="term" value="C:outer membrane-bounded periplasmic space"/>
    <property type="evidence" value="ECO:0000318"/>
    <property type="project" value="GO_Central"/>
</dbReference>
<dbReference type="GO" id="GO:0030975">
    <property type="term" value="F:thiamine binding"/>
    <property type="evidence" value="ECO:0000318"/>
    <property type="project" value="GO_Central"/>
</dbReference>
<dbReference type="GO" id="GO:0030976">
    <property type="term" value="F:thiamine pyrophosphate binding"/>
    <property type="evidence" value="ECO:0000318"/>
    <property type="project" value="GO_Central"/>
</dbReference>
<dbReference type="GO" id="GO:0015888">
    <property type="term" value="P:thiamine transport"/>
    <property type="evidence" value="ECO:0000318"/>
    <property type="project" value="GO_Central"/>
</dbReference>
<dbReference type="GO" id="GO:0055085">
    <property type="term" value="P:transmembrane transport"/>
    <property type="evidence" value="ECO:0007669"/>
    <property type="project" value="InterPro"/>
</dbReference>
<dbReference type="Gene3D" id="3.40.190.10">
    <property type="entry name" value="Periplasmic binding protein-like II"/>
    <property type="match status" value="2"/>
</dbReference>
<dbReference type="InterPro" id="IPR006059">
    <property type="entry name" value="SBP"/>
</dbReference>
<dbReference type="InterPro" id="IPR006061">
    <property type="entry name" value="SBP_1_CS"/>
</dbReference>
<dbReference type="InterPro" id="IPR005967">
    <property type="entry name" value="ThiB"/>
</dbReference>
<dbReference type="InterPro" id="IPR005948">
    <property type="entry name" value="ThiB-like"/>
</dbReference>
<dbReference type="NCBIfam" id="TIGR01254">
    <property type="entry name" value="sfuA"/>
    <property type="match status" value="1"/>
</dbReference>
<dbReference type="NCBIfam" id="TIGR01276">
    <property type="entry name" value="thiB"/>
    <property type="match status" value="1"/>
</dbReference>
<dbReference type="PANTHER" id="PTHR30006:SF3">
    <property type="entry name" value="THIAMINE-BINDING PERIPLASMIC PROTEIN"/>
    <property type="match status" value="1"/>
</dbReference>
<dbReference type="PANTHER" id="PTHR30006">
    <property type="entry name" value="THIAMINE-BINDING PERIPLASMIC PROTEIN-RELATED"/>
    <property type="match status" value="1"/>
</dbReference>
<dbReference type="Pfam" id="PF01547">
    <property type="entry name" value="SBP_bac_1"/>
    <property type="match status" value="1"/>
</dbReference>
<dbReference type="SUPFAM" id="SSF53850">
    <property type="entry name" value="Periplasmic binding protein-like II"/>
    <property type="match status" value="1"/>
</dbReference>
<dbReference type="PROSITE" id="PS01037">
    <property type="entry name" value="SBP_BACTERIAL_1"/>
    <property type="match status" value="1"/>
</dbReference>
<feature type="signal peptide" evidence="3">
    <location>
        <begin position="1"/>
        <end position="20"/>
    </location>
</feature>
<feature type="chain" id="PRO_0000031706" description="Thiamine-binding periplasmic protein">
    <location>
        <begin position="21"/>
        <end position="332"/>
    </location>
</feature>
<feature type="binding site" evidence="1">
    <location>
        <position position="202"/>
    </location>
    <ligand>
        <name>thiamine</name>
        <dbReference type="ChEBI" id="CHEBI:18385"/>
    </ligand>
</feature>
<feature type="binding site" evidence="1">
    <location>
        <begin position="220"/>
        <end position="223"/>
    </location>
    <ligand>
        <name>thiamine</name>
        <dbReference type="ChEBI" id="CHEBI:18385"/>
    </ligand>
</feature>
<gene>
    <name type="primary">thiB</name>
    <name type="synonym">tbpA</name>
    <name type="ordered locus">HI_1019</name>
</gene>
<protein>
    <recommendedName>
        <fullName>Thiamine-binding periplasmic protein</fullName>
    </recommendedName>
</protein>